<accession>Q05973</accession>
<sequence>MDEKYTAKNRDKTFVVIEKRFKKNIIHRFSAKRSLFLFTPRNPIRRLAVCIATNVCFDYFLMFTIMINCVFLAMPDISEFAEYIFLGIYTMEMAIKLVAGGFFIDKYTYLRDAWNCLDFTVIMISYITLLLQTINDKVISDITGLRTFRVLRALRTLSIIPGLKTMVNALLRALRMLISVLILILFCLWIFSQAGVQLFGGALRHKCVLQIHGSPAFGKTYDEFYAEHIENSDNWLAKGNGEYVLCGNATGAGPCPTNYTCLPDIGENPNYGYTNFDSIGWSMLISFQLLTQDYWEDVYNKVIRAHSPWTVIYFIVINFFGSLYLMNLMLAVVATAYELEVKNTGKKLQQTAATAREQSLKEQERRNTLTVSEADSHVDDRNCTCCEQCCGCCYNPWLRVQSFAHCIITDSFTEVFIIFIIVLNTVFLAMEHHGMSMELKNVLKVANYVFTTVFVLEAILKLLAFNKQYFKSGWNICDLVVVVASLIDLGVEGLKGVSVFRSFRLLRVFHLAQSWTTMRLLLCIILNTLGSLGYLTIILIIVIYIFAVTGLQLFHTEYTPDKFRGEPVPRWNFNDFLHSFMMVFRILCGEWIEPMYDCMRACNGLCFLIFIPVTVFGKTLFFLFIGLVLGAFGSDTVEQEVEVSSFALPGPESKPCSVRERGISATDDNVKDDGQDEVQQNSEETKIDLRNNDKQSKDGMILENNCNNDSLASLGSLGSIPDIMDGSSVEDDISSCQQKDIQPCLPLFISSRFKCLREFDDTSHGKKWNNFRRQLMMVCENKYFETGVLVIIFASSILLAFEDIYLNEKPRLKLAIFYLDITFCLLFFLEMVLKLVALGFVHYYTHFWTILDFTIVIITVISLAASGLGMEQITAFRSLRTLRALRPLRAVSRWQGMKIIVNALMLSIPSIFNVLLVCVVFWLIFAIMGVQLFAGKFYKCVNETNMRIPPTEVANKIECYNKNYTWVNSNVNFDNVGGAFLALFQVATFEGWMEIMADAVDVTEVDEQPKFEATVYYYFYFVLFIIFGSFFVLNLVIGVIIDKFSFLKKKYDGTYLDMFLTPTQQNYYNTLKKLGTKKPQKTVKRPKNKCQAVVYDLVMSNQFEIFITTIIITNMIFMAFEHYNQSEVVTEVLATANIAFTILYAVEAIIKIIGLRIHYLRNLWNVFDFLVVTLSVMDAFLNDIFGDGIFMNPSLLRVARMFRIGRIIRLIKWAKGMRKLLFALVISLPALFNIGALLMLVMFIYTIIGMSSFGQIKLSGALNDQVNFQTFGKTFLLLVRLATSAGWNDILGPLLIQPPNCDPNYITTSTGEKIKVVNGDCGMPWLAISYMVSYIIIVFMIVFNMYIAVILENFNQAHAQEEVGITEDDLDMFYGVWEQYDPLATQFIKHEQLSDFIQDLDPPLKVKKPNNVAIATFDLPIVKGGHIHCLDILLALVKFALGGNLEETEAFKRVRTQMEARFDEIFPTREKSEIRTSTLQMRREEMAARTLQRAWKRRKIMRSFPSPEMIRYFIISAPETAV</sequence>
<keyword id="KW-1003">Cell membrane</keyword>
<keyword id="KW-1015">Disulfide bond</keyword>
<keyword id="KW-0325">Glycoprotein</keyword>
<keyword id="KW-0407">Ion channel</keyword>
<keyword id="KW-0406">Ion transport</keyword>
<keyword id="KW-0472">Membrane</keyword>
<keyword id="KW-0597">Phosphoprotein</keyword>
<keyword id="KW-0677">Repeat</keyword>
<keyword id="KW-0915">Sodium</keyword>
<keyword id="KW-0894">Sodium channel</keyword>
<keyword id="KW-0739">Sodium transport</keyword>
<keyword id="KW-0812">Transmembrane</keyword>
<keyword id="KW-1133">Transmembrane helix</keyword>
<keyword id="KW-0813">Transport</keyword>
<keyword id="KW-0851">Voltage-gated channel</keyword>
<protein>
    <recommendedName>
        <fullName>Sodium channel protein 1 brain</fullName>
    </recommendedName>
    <alternativeName>
        <fullName>Sodium channel protein I brain</fullName>
    </alternativeName>
</protein>
<name>SCN1_HETBL</name>
<dbReference type="EMBL" id="D14525">
    <property type="protein sequence ID" value="BAA03398.1"/>
    <property type="molecule type" value="mRNA"/>
</dbReference>
<dbReference type="PIR" id="JC1101">
    <property type="entry name" value="JC1101"/>
</dbReference>
<dbReference type="SMR" id="Q05973"/>
<dbReference type="GO" id="GO:0001518">
    <property type="term" value="C:voltage-gated sodium channel complex"/>
    <property type="evidence" value="ECO:0007669"/>
    <property type="project" value="InterPro"/>
</dbReference>
<dbReference type="GO" id="GO:0005248">
    <property type="term" value="F:voltage-gated sodium channel activity"/>
    <property type="evidence" value="ECO:0007669"/>
    <property type="project" value="InterPro"/>
</dbReference>
<dbReference type="GO" id="GO:0086010">
    <property type="term" value="P:membrane depolarization during action potential"/>
    <property type="evidence" value="ECO:0007669"/>
    <property type="project" value="TreeGrafter"/>
</dbReference>
<dbReference type="GO" id="GO:0019228">
    <property type="term" value="P:neuronal action potential"/>
    <property type="evidence" value="ECO:0007669"/>
    <property type="project" value="TreeGrafter"/>
</dbReference>
<dbReference type="CDD" id="cd13433">
    <property type="entry name" value="Na_channel_gate"/>
    <property type="match status" value="1"/>
</dbReference>
<dbReference type="FunFam" id="1.10.287.70:FF:000001">
    <property type="entry name" value="Sodium channel protein"/>
    <property type="match status" value="1"/>
</dbReference>
<dbReference type="FunFam" id="1.20.120.350:FF:000059">
    <property type="entry name" value="Sodium channel protein"/>
    <property type="match status" value="1"/>
</dbReference>
<dbReference type="FunFam" id="1.20.120.350:FF:000068">
    <property type="entry name" value="Sodium channel protein"/>
    <property type="match status" value="1"/>
</dbReference>
<dbReference type="FunFam" id="1.20.120.350:FF:000009">
    <property type="entry name" value="Voltage-dependent T-type calcium channel subunit alpha"/>
    <property type="match status" value="1"/>
</dbReference>
<dbReference type="Gene3D" id="1.10.287.70">
    <property type="match status" value="4"/>
</dbReference>
<dbReference type="Gene3D" id="1.10.238.10">
    <property type="entry name" value="EF-hand"/>
    <property type="match status" value="1"/>
</dbReference>
<dbReference type="Gene3D" id="1.20.120.350">
    <property type="entry name" value="Voltage-gated potassium channels. Chain C"/>
    <property type="match status" value="4"/>
</dbReference>
<dbReference type="InterPro" id="IPR005821">
    <property type="entry name" value="Ion_trans_dom"/>
</dbReference>
<dbReference type="InterPro" id="IPR001696">
    <property type="entry name" value="Na_channel_asu"/>
</dbReference>
<dbReference type="InterPro" id="IPR044564">
    <property type="entry name" value="Na_chnl_inactivation_gate"/>
</dbReference>
<dbReference type="InterPro" id="IPR043203">
    <property type="entry name" value="VGCC_Ca_Na"/>
</dbReference>
<dbReference type="InterPro" id="IPR027359">
    <property type="entry name" value="Volt_channel_dom_sf"/>
</dbReference>
<dbReference type="PANTHER" id="PTHR10037:SF62">
    <property type="entry name" value="SODIUM CHANNEL PROTEIN 60E"/>
    <property type="match status" value="1"/>
</dbReference>
<dbReference type="PANTHER" id="PTHR10037">
    <property type="entry name" value="VOLTAGE-GATED CATION CHANNEL CALCIUM AND SODIUM"/>
    <property type="match status" value="1"/>
</dbReference>
<dbReference type="Pfam" id="PF00520">
    <property type="entry name" value="Ion_trans"/>
    <property type="match status" value="4"/>
</dbReference>
<dbReference type="PRINTS" id="PR00170">
    <property type="entry name" value="NACHANNEL"/>
</dbReference>
<dbReference type="SUPFAM" id="SSF81324">
    <property type="entry name" value="Voltage-gated potassium channels"/>
    <property type="match status" value="4"/>
</dbReference>
<evidence type="ECO:0000250" key="1">
    <source>
        <dbReference type="UniProtKB" id="D0E0C2"/>
    </source>
</evidence>
<evidence type="ECO:0000255" key="2"/>
<evidence type="ECO:0000305" key="3"/>
<reference key="1">
    <citation type="journal article" date="1992" name="Biochem. Biophys. Res. Commun.">
        <title>Primary structure of squid sodium channel deduced from the complementary DNA sequence.</title>
        <authorList>
            <person name="Sato C."/>
            <person name="Matsumoto G."/>
        </authorList>
    </citation>
    <scope>NUCLEOTIDE SEQUENCE [MRNA]</scope>
    <source>
        <tissue>Optic lobe</tissue>
    </source>
</reference>
<organism>
    <name type="scientific">Heterololigo bleekeri</name>
    <name type="common">Spear squid</name>
    <name type="synonym">Loligo bleekeri</name>
    <dbReference type="NCBI Taxonomy" id="1423826"/>
    <lineage>
        <taxon>Eukaryota</taxon>
        <taxon>Metazoa</taxon>
        <taxon>Spiralia</taxon>
        <taxon>Lophotrochozoa</taxon>
        <taxon>Mollusca</taxon>
        <taxon>Cephalopoda</taxon>
        <taxon>Coleoidea</taxon>
        <taxon>Decapodiformes</taxon>
        <taxon>Myopsida</taxon>
        <taxon>Loliginidae</taxon>
        <taxon>Heterololigo</taxon>
    </lineage>
</organism>
<feature type="chain" id="PRO_0000048514" description="Sodium channel protein 1 brain">
    <location>
        <begin position="1"/>
        <end position="1522"/>
    </location>
</feature>
<feature type="topological domain" description="Cytoplasmic" evidence="3">
    <location>
        <begin position="1"/>
        <end position="50"/>
    </location>
</feature>
<feature type="transmembrane region" description="Helical; Name=S1 of repeat I">
    <location>
        <begin position="51"/>
        <end position="70"/>
    </location>
</feature>
<feature type="topological domain" description="Extracellular" evidence="3">
    <location>
        <begin position="71"/>
        <end position="77"/>
    </location>
</feature>
<feature type="transmembrane region" description="Helical; Name=S2 of repeat I">
    <location>
        <begin position="78"/>
        <end position="99"/>
    </location>
</feature>
<feature type="topological domain" description="Cytoplasmic" evidence="3">
    <location>
        <begin position="100"/>
        <end position="112"/>
    </location>
</feature>
<feature type="transmembrane region" description="Helical; Name=S3 of repeat I">
    <location>
        <begin position="113"/>
        <end position="134"/>
    </location>
</feature>
<feature type="topological domain" description="Extracellular" evidence="3">
    <location>
        <begin position="135"/>
        <end position="143"/>
    </location>
</feature>
<feature type="transmembrane region" description="Helical; Voltage-sensor; Name=S4 of repeat I">
    <location>
        <begin position="144"/>
        <end position="167"/>
    </location>
</feature>
<feature type="topological domain" description="Cytoplasmic" evidence="3">
    <location>
        <begin position="168"/>
        <end position="179"/>
    </location>
</feature>
<feature type="transmembrane region" description="Helical; Name=S5 of repeat I">
    <location>
        <begin position="180"/>
        <end position="201"/>
    </location>
</feature>
<feature type="topological domain" description="Extracellular" evidence="3">
    <location>
        <begin position="202"/>
        <end position="278"/>
    </location>
</feature>
<feature type="intramembrane region" description="Pore-forming" evidence="1">
    <location>
        <begin position="279"/>
        <end position="303"/>
    </location>
</feature>
<feature type="topological domain" description="Extracellular" evidence="3">
    <location>
        <begin position="304"/>
        <end position="308"/>
    </location>
</feature>
<feature type="transmembrane region" description="Helical; Name=S6 of repeat I">
    <location>
        <begin position="309"/>
        <end position="331"/>
    </location>
</feature>
<feature type="topological domain" description="Cytoplasmic" evidence="3">
    <location>
        <begin position="332"/>
        <end position="406"/>
    </location>
</feature>
<feature type="transmembrane region" description="Helical; Name=S1 of repeat II">
    <location>
        <begin position="407"/>
        <end position="426"/>
    </location>
</feature>
<feature type="topological domain" description="Extracellular" evidence="3">
    <location>
        <begin position="427"/>
        <end position="442"/>
    </location>
</feature>
<feature type="transmembrane region" description="Helical; Name=S2 of repeat II">
    <location>
        <begin position="443"/>
        <end position="464"/>
    </location>
</feature>
<feature type="topological domain" description="Cytoplasmic" evidence="3">
    <location>
        <begin position="465"/>
        <end position="472"/>
    </location>
</feature>
<feature type="transmembrane region" description="Helical; Name=S3 of repeat II">
    <location>
        <begin position="473"/>
        <end position="491"/>
    </location>
</feature>
<feature type="topological domain" description="Extracellular" evidence="3">
    <location>
        <begin position="492"/>
        <end position="498"/>
    </location>
</feature>
<feature type="transmembrane region" description="Helical; Voltage-sensor; Name=S4 of repeat II">
    <location>
        <begin position="499"/>
        <end position="522"/>
    </location>
</feature>
<feature type="topological domain" description="Cytoplasmic" evidence="3">
    <location>
        <begin position="523"/>
        <end position="531"/>
    </location>
</feature>
<feature type="transmembrane region" description="Helical; Name=S5 of repeat II">
    <location>
        <begin position="532"/>
        <end position="553"/>
    </location>
</feature>
<feature type="topological domain" description="Extracellular" evidence="3">
    <location>
        <begin position="554"/>
        <end position="575"/>
    </location>
</feature>
<feature type="intramembrane region" description="Pore-forming" evidence="1">
    <location>
        <begin position="576"/>
        <end position="596"/>
    </location>
</feature>
<feature type="topological domain" description="Extracellular" evidence="3">
    <location>
        <begin position="597"/>
        <end position="607"/>
    </location>
</feature>
<feature type="transmembrane region" description="Helical; Name=S6 of repeat II">
    <location>
        <begin position="608"/>
        <end position="628"/>
    </location>
</feature>
<feature type="topological domain" description="Cytoplasmic" evidence="3">
    <location>
        <begin position="629"/>
        <end position="777"/>
    </location>
</feature>
<feature type="transmembrane region" description="Helical; Name=S1 of repeat III">
    <location>
        <begin position="778"/>
        <end position="797"/>
    </location>
</feature>
<feature type="topological domain" description="Extracellular" evidence="3">
    <location>
        <begin position="798"/>
        <end position="815"/>
    </location>
</feature>
<feature type="transmembrane region" description="Helical; Name=S2 of repeat III">
    <location>
        <begin position="816"/>
        <end position="837"/>
    </location>
</feature>
<feature type="topological domain" description="Cytoplasmic" evidence="3">
    <location>
        <begin position="838"/>
        <end position="846"/>
    </location>
</feature>
<feature type="transmembrane region" description="Helical; Name=S3 of repeat III">
    <location>
        <begin position="847"/>
        <end position="868"/>
    </location>
</feature>
<feature type="topological domain" description="Extracellular" evidence="3">
    <location>
        <begin position="869"/>
        <end position="874"/>
    </location>
</feature>
<feature type="transmembrane region" description="Helical; Voltage-sensor; Name=S4 of repeat III">
    <location>
        <begin position="875"/>
        <end position="898"/>
    </location>
</feature>
<feature type="topological domain" description="Cytoplasmic" evidence="3">
    <location>
        <begin position="899"/>
        <end position="915"/>
    </location>
</feature>
<feature type="transmembrane region" description="Helical; Name=S5 of repeat III">
    <location>
        <begin position="916"/>
        <end position="937"/>
    </location>
</feature>
<feature type="topological domain" description="Extracellular" evidence="3">
    <location>
        <begin position="938"/>
        <end position="976"/>
    </location>
</feature>
<feature type="intramembrane region" description="Pore-forming" evidence="1">
    <location>
        <begin position="977"/>
        <end position="998"/>
    </location>
</feature>
<feature type="topological domain" description="Extracellular" evidence="3">
    <location>
        <begin position="999"/>
        <end position="1009"/>
    </location>
</feature>
<feature type="transmembrane region" description="Helical; Name=S6 of repeat III">
    <location>
        <begin position="1010"/>
        <end position="1022"/>
    </location>
</feature>
<feature type="topological domain" description="Cytoplasmic" evidence="3">
    <location>
        <begin position="1023"/>
        <end position="1100"/>
    </location>
</feature>
<feature type="transmembrane region" description="Helical; Name=S1 of repeat IV">
    <location>
        <begin position="1101"/>
        <end position="1120"/>
    </location>
</feature>
<feature type="topological domain" description="Extracellular" evidence="3">
    <location>
        <begin position="1121"/>
        <end position="1132"/>
    </location>
</feature>
<feature type="transmembrane region" description="Helical; Name=S2 of repeat IV">
    <location>
        <begin position="1133"/>
        <end position="1154"/>
    </location>
</feature>
<feature type="topological domain" description="Cytoplasmic" evidence="3">
    <location>
        <begin position="1155"/>
        <end position="1162"/>
    </location>
</feature>
<feature type="transmembrane region" description="Helical; Name=S3 of repeat IV">
    <location>
        <begin position="1163"/>
        <end position="1184"/>
    </location>
</feature>
<feature type="topological domain" description="Extracellular" evidence="3">
    <location>
        <begin position="1185"/>
        <end position="1194"/>
    </location>
</feature>
<feature type="transmembrane region" description="Helical; Voltage-sensor; Name=S4 of repeat IV">
    <location>
        <begin position="1195"/>
        <end position="1218"/>
    </location>
</feature>
<feature type="topological domain" description="Cytoplasmic" evidence="3">
    <location>
        <begin position="1219"/>
        <end position="1236"/>
    </location>
</feature>
<feature type="transmembrane region" description="Helical; Name=S5 of repeat IV">
    <location>
        <begin position="1237"/>
        <end position="1258"/>
    </location>
</feature>
<feature type="topological domain" description="Extracellular" evidence="3">
    <location>
        <begin position="1259"/>
        <end position="1270"/>
    </location>
</feature>
<feature type="intramembrane region" description="Pore-forming" evidence="1">
    <location>
        <begin position="1271"/>
        <end position="1293"/>
    </location>
</feature>
<feature type="topological domain" description="Extracellular" evidence="3">
    <location>
        <begin position="1294"/>
        <end position="1323"/>
    </location>
</feature>
<feature type="transmembrane region" description="Helical; Name=S6 of repeat IV">
    <location>
        <begin position="1324"/>
        <end position="1346"/>
    </location>
</feature>
<feature type="topological domain" description="Cytoplasmic" evidence="3">
    <location>
        <begin position="1347"/>
        <end position="1522"/>
    </location>
</feature>
<feature type="repeat" description="I" evidence="3">
    <location>
        <begin position="41"/>
        <end position="342"/>
    </location>
</feature>
<feature type="repeat" description="II" evidence="3">
    <location>
        <begin position="393"/>
        <end position="647"/>
    </location>
</feature>
<feature type="repeat" description="III" evidence="3">
    <location>
        <begin position="770"/>
        <end position="1074"/>
    </location>
</feature>
<feature type="repeat" description="IV" evidence="3">
    <location>
        <begin position="1083"/>
        <end position="1386"/>
    </location>
</feature>
<feature type="modified residue" description="Phosphothreonine; by PKC" evidence="2">
    <location>
        <position position="1076"/>
    </location>
</feature>
<feature type="glycosylation site" description="N-linked (GlcNAc...) asparagine" evidence="2">
    <location>
        <position position="248"/>
    </location>
</feature>
<feature type="glycosylation site" description="N-linked (GlcNAc...) asparagine" evidence="2">
    <location>
        <position position="258"/>
    </location>
</feature>
<feature type="glycosylation site" description="N-linked (GlcNAc...) asparagine" evidence="2">
    <location>
        <position position="942"/>
    </location>
</feature>
<feature type="glycosylation site" description="N-linked (GlcNAc...) asparagine" evidence="2">
    <location>
        <position position="963"/>
    </location>
</feature>
<feature type="glycosylation site" description="N-linked (GlcNAc...) asparagine" evidence="2">
    <location>
        <position position="1124"/>
    </location>
</feature>
<feature type="disulfide bond" evidence="1">
    <location>
        <begin position="207"/>
        <end position="255"/>
    </location>
</feature>
<feature type="disulfide bond" evidence="1">
    <location>
        <begin position="598"/>
        <end position="606"/>
    </location>
</feature>
<proteinExistence type="evidence at transcript level"/>
<comment type="function">
    <text evidence="3">Mediates the voltage-dependent sodium ion permeability of excitable membranes. Assuming opened or closed conformations in response to the voltage difference across the membrane, the protein forms a sodium-selective channel through which Na(+) ions may pass in accordance with their electrochemical gradient.</text>
</comment>
<comment type="subcellular location">
    <subcellularLocation>
        <location evidence="3">Cell membrane</location>
        <topology evidence="1">Multi-pass membrane protein</topology>
    </subcellularLocation>
</comment>
<comment type="domain">
    <text evidence="3">The sequence contains 4 internal repeats, each with 5 hydrophobic segments (S1, S2, S3, S5, S6) and one positively charged segment (S4). Segments S4 are probably the voltage-sensors and are characterized by a series of positively charged amino acids at every third position.</text>
</comment>
<comment type="similarity">
    <text evidence="3">Belongs to the sodium channel (TC 1.A.1.10) family.</text>
</comment>